<name>NATK_BACSU</name>
<sequence length="318" mass="35076">MITLFQCLYLILFSFICYQGAAAFSHSTAASWLAAALGAAAAGLYIWNTKRVWKHCSSGLCAWIAVIQVMSVGVVLIGTDIMPVLCVIAIFAGCEGLRIGQSALQARLSDQIDKLTQAEQHANQMLIDVRSRNHDTMKHITAIKSAQPKADTQAYIQNWADQYSQYDRFLKGENAYVAGVLYDFLEKARASNVSVSLHMHTPLSSLPFSPADQVSLVGNILENALDSAAEAREKAEIKLETSLRSGLYVLTCENSTPGMDPKVLDTIYQSFGRSTKNGAHEGMGTYIIQKLVKGAFGRLDFTYRHPIFRLEIKIPFQK</sequence>
<comment type="function">
    <text evidence="3 4">Member of the two-component regulatory system NatK/NatR that positively regulates the expression of the natAB operon. Potentially phosphorylates NatR.</text>
</comment>
<comment type="catalytic activity">
    <reaction evidence="1">
        <text>ATP + protein L-histidine = ADP + protein N-phospho-L-histidine.</text>
        <dbReference type="EC" id="2.7.13.3"/>
    </reaction>
</comment>
<comment type="subcellular location">
    <subcellularLocation>
        <location evidence="6">Cell membrane</location>
        <topology evidence="2">Multi-pass membrane protein</topology>
    </subcellularLocation>
</comment>
<feature type="chain" id="PRO_0000074920" description="Sensor histidine kinase NatK">
    <location>
        <begin position="1"/>
        <end position="318"/>
    </location>
</feature>
<feature type="transmembrane region" description="Helical" evidence="2">
    <location>
        <begin position="4"/>
        <end position="24"/>
    </location>
</feature>
<feature type="transmembrane region" description="Helical" evidence="2">
    <location>
        <begin position="27"/>
        <end position="47"/>
    </location>
</feature>
<feature type="transmembrane region" description="Helical" evidence="2">
    <location>
        <begin position="72"/>
        <end position="82"/>
    </location>
</feature>
<feature type="domain" description="Histidine kinase" evidence="6">
    <location>
        <begin position="132"/>
        <end position="318"/>
    </location>
</feature>
<feature type="modified residue" description="Phosphohistidine; by autocatalysis" evidence="6">
    <location>
        <position position="134"/>
    </location>
</feature>
<feature type="sequence conflict" description="In Ref. 1; AAB53020." evidence="6" ref="1">
    <original>S</original>
    <variation>N</variation>
    <location>
        <position position="164"/>
    </location>
</feature>
<keyword id="KW-0067">ATP-binding</keyword>
<keyword id="KW-1003">Cell membrane</keyword>
<keyword id="KW-0418">Kinase</keyword>
<keyword id="KW-0472">Membrane</keyword>
<keyword id="KW-0547">Nucleotide-binding</keyword>
<keyword id="KW-0597">Phosphoprotein</keyword>
<keyword id="KW-1185">Reference proteome</keyword>
<keyword id="KW-0808">Transferase</keyword>
<keyword id="KW-0812">Transmembrane</keyword>
<keyword id="KW-1133">Transmembrane helix</keyword>
<keyword id="KW-0902">Two-component regulatory system</keyword>
<dbReference type="EC" id="2.7.13.3" evidence="1"/>
<dbReference type="EMBL" id="U30873">
    <property type="protein sequence ID" value="AAB53020.1"/>
    <property type="molecule type" value="Genomic_DNA"/>
</dbReference>
<dbReference type="EMBL" id="AB000617">
    <property type="protein sequence ID" value="BAA22234.1"/>
    <property type="molecule type" value="Genomic_DNA"/>
</dbReference>
<dbReference type="EMBL" id="AL009126">
    <property type="protein sequence ID" value="CAB12067.1"/>
    <property type="molecule type" value="Genomic_DNA"/>
</dbReference>
<dbReference type="PIR" id="H69754">
    <property type="entry name" value="H69754"/>
</dbReference>
<dbReference type="RefSeq" id="NP_388155.1">
    <property type="nucleotide sequence ID" value="NC_000964.3"/>
</dbReference>
<dbReference type="RefSeq" id="WP_003246454.1">
    <property type="nucleotide sequence ID" value="NZ_OZ025638.1"/>
</dbReference>
<dbReference type="SMR" id="P70954"/>
<dbReference type="FunCoup" id="P70954">
    <property type="interactions" value="175"/>
</dbReference>
<dbReference type="STRING" id="224308.BSU02730"/>
<dbReference type="PaxDb" id="224308-BSU02730"/>
<dbReference type="DNASU" id="938382"/>
<dbReference type="EnsemblBacteria" id="CAB12067">
    <property type="protein sequence ID" value="CAB12067"/>
    <property type="gene ID" value="BSU_02730"/>
</dbReference>
<dbReference type="GeneID" id="938382"/>
<dbReference type="KEGG" id="bsu:BSU02730"/>
<dbReference type="PATRIC" id="fig|224308.179.peg.283"/>
<dbReference type="eggNOG" id="COG3290">
    <property type="taxonomic scope" value="Bacteria"/>
</dbReference>
<dbReference type="InParanoid" id="P70954"/>
<dbReference type="OrthoDB" id="1634477at2"/>
<dbReference type="PhylomeDB" id="P70954"/>
<dbReference type="BioCyc" id="BSUB:BSU02730-MONOMER"/>
<dbReference type="Proteomes" id="UP000001570">
    <property type="component" value="Chromosome"/>
</dbReference>
<dbReference type="GO" id="GO:0005886">
    <property type="term" value="C:plasma membrane"/>
    <property type="evidence" value="ECO:0007669"/>
    <property type="project" value="UniProtKB-SubCell"/>
</dbReference>
<dbReference type="GO" id="GO:0005524">
    <property type="term" value="F:ATP binding"/>
    <property type="evidence" value="ECO:0007669"/>
    <property type="project" value="UniProtKB-KW"/>
</dbReference>
<dbReference type="GO" id="GO:0004673">
    <property type="term" value="F:protein histidine kinase activity"/>
    <property type="evidence" value="ECO:0007669"/>
    <property type="project" value="UniProtKB-EC"/>
</dbReference>
<dbReference type="GO" id="GO:0000160">
    <property type="term" value="P:phosphorelay signal transduction system"/>
    <property type="evidence" value="ECO:0007669"/>
    <property type="project" value="UniProtKB-KW"/>
</dbReference>
<dbReference type="CDD" id="cd16935">
    <property type="entry name" value="HATPase_AgrC-ComD-like"/>
    <property type="match status" value="1"/>
</dbReference>
<dbReference type="Gene3D" id="3.30.565.10">
    <property type="entry name" value="Histidine kinase-like ATPase, C-terminal domain"/>
    <property type="match status" value="1"/>
</dbReference>
<dbReference type="InterPro" id="IPR036890">
    <property type="entry name" value="HATPase_C_sf"/>
</dbReference>
<dbReference type="Pfam" id="PF02518">
    <property type="entry name" value="HATPase_c"/>
    <property type="match status" value="1"/>
</dbReference>
<dbReference type="SMART" id="SM00387">
    <property type="entry name" value="HATPase_c"/>
    <property type="match status" value="1"/>
</dbReference>
<dbReference type="SUPFAM" id="SSF55874">
    <property type="entry name" value="ATPase domain of HSP90 chaperone/DNA topoisomerase II/histidine kinase"/>
    <property type="match status" value="1"/>
</dbReference>
<organism>
    <name type="scientific">Bacillus subtilis (strain 168)</name>
    <dbReference type="NCBI Taxonomy" id="224308"/>
    <lineage>
        <taxon>Bacteria</taxon>
        <taxon>Bacillati</taxon>
        <taxon>Bacillota</taxon>
        <taxon>Bacilli</taxon>
        <taxon>Bacillales</taxon>
        <taxon>Bacillaceae</taxon>
        <taxon>Bacillus</taxon>
    </lineage>
</organism>
<proteinExistence type="inferred from homology"/>
<evidence type="ECO:0000250" key="1">
    <source>
        <dbReference type="UniProtKB" id="P0AEC8"/>
    </source>
</evidence>
<evidence type="ECO:0000255" key="2"/>
<evidence type="ECO:0000269" key="3">
    <source>
    </source>
</evidence>
<evidence type="ECO:0000269" key="4">
    <source>
    </source>
</evidence>
<evidence type="ECO:0000303" key="5">
    <source>
    </source>
</evidence>
<evidence type="ECO:0000305" key="6"/>
<evidence type="ECO:0000312" key="7">
    <source>
        <dbReference type="EMBL" id="BAA22234.1"/>
    </source>
</evidence>
<evidence type="ECO:0000312" key="8">
    <source>
        <dbReference type="EMBL" id="CAB12067.1"/>
    </source>
</evidence>
<protein>
    <recommendedName>
        <fullName evidence="6">Sensor histidine kinase NatK</fullName>
        <ecNumber evidence="1">2.7.13.3</ecNumber>
    </recommendedName>
</protein>
<gene>
    <name evidence="5" type="primary">natK</name>
    <name evidence="7" type="synonym">yccG</name>
    <name evidence="8" type="ordered locus">BSU02730</name>
</gene>
<accession>P70954</accession>
<accession>O34965</accession>
<reference key="1">
    <citation type="journal article" date="1997" name="Mol. Microbiol.">
        <title>A two-gene ABC-type transport system that extrudes Na+ in Bacillus subtilis is induced by ethanol or protonophore.</title>
        <authorList>
            <person name="Cheng J."/>
            <person name="Guffanti A.A."/>
            <person name="Krulwich T.A."/>
        </authorList>
    </citation>
    <scope>NUCLEOTIDE SEQUENCE [GENOMIC DNA]</scope>
    <source>
        <strain>BD99</strain>
    </source>
</reference>
<reference key="2">
    <citation type="journal article" date="1997" name="Microbiology">
        <title>A 32 kb nucleotide sequence from the region of the lincomycin-resistance gene (22 degrees-25 degrees) of the Bacillus subtilis chromosome and identification of the site of the lin-2 mutation.</title>
        <authorList>
            <person name="Kumano M."/>
            <person name="Tamakoshi A."/>
            <person name="Yamane K."/>
        </authorList>
    </citation>
    <scope>NUCLEOTIDE SEQUENCE [GENOMIC DNA]</scope>
    <source>
        <strain>168</strain>
    </source>
</reference>
<reference key="3">
    <citation type="journal article" date="1997" name="Nature">
        <title>The complete genome sequence of the Gram-positive bacterium Bacillus subtilis.</title>
        <authorList>
            <person name="Kunst F."/>
            <person name="Ogasawara N."/>
            <person name="Moszer I."/>
            <person name="Albertini A.M."/>
            <person name="Alloni G."/>
            <person name="Azevedo V."/>
            <person name="Bertero M.G."/>
            <person name="Bessieres P."/>
            <person name="Bolotin A."/>
            <person name="Borchert S."/>
            <person name="Borriss R."/>
            <person name="Boursier L."/>
            <person name="Brans A."/>
            <person name="Braun M."/>
            <person name="Brignell S.C."/>
            <person name="Bron S."/>
            <person name="Brouillet S."/>
            <person name="Bruschi C.V."/>
            <person name="Caldwell B."/>
            <person name="Capuano V."/>
            <person name="Carter N.M."/>
            <person name="Choi S.-K."/>
            <person name="Codani J.-J."/>
            <person name="Connerton I.F."/>
            <person name="Cummings N.J."/>
            <person name="Daniel R.A."/>
            <person name="Denizot F."/>
            <person name="Devine K.M."/>
            <person name="Duesterhoeft A."/>
            <person name="Ehrlich S.D."/>
            <person name="Emmerson P.T."/>
            <person name="Entian K.-D."/>
            <person name="Errington J."/>
            <person name="Fabret C."/>
            <person name="Ferrari E."/>
            <person name="Foulger D."/>
            <person name="Fritz C."/>
            <person name="Fujita M."/>
            <person name="Fujita Y."/>
            <person name="Fuma S."/>
            <person name="Galizzi A."/>
            <person name="Galleron N."/>
            <person name="Ghim S.-Y."/>
            <person name="Glaser P."/>
            <person name="Goffeau A."/>
            <person name="Golightly E.J."/>
            <person name="Grandi G."/>
            <person name="Guiseppi G."/>
            <person name="Guy B.J."/>
            <person name="Haga K."/>
            <person name="Haiech J."/>
            <person name="Harwood C.R."/>
            <person name="Henaut A."/>
            <person name="Hilbert H."/>
            <person name="Holsappel S."/>
            <person name="Hosono S."/>
            <person name="Hullo M.-F."/>
            <person name="Itaya M."/>
            <person name="Jones L.-M."/>
            <person name="Joris B."/>
            <person name="Karamata D."/>
            <person name="Kasahara Y."/>
            <person name="Klaerr-Blanchard M."/>
            <person name="Klein C."/>
            <person name="Kobayashi Y."/>
            <person name="Koetter P."/>
            <person name="Koningstein G."/>
            <person name="Krogh S."/>
            <person name="Kumano M."/>
            <person name="Kurita K."/>
            <person name="Lapidus A."/>
            <person name="Lardinois S."/>
            <person name="Lauber J."/>
            <person name="Lazarevic V."/>
            <person name="Lee S.-M."/>
            <person name="Levine A."/>
            <person name="Liu H."/>
            <person name="Masuda S."/>
            <person name="Mauel C."/>
            <person name="Medigue C."/>
            <person name="Medina N."/>
            <person name="Mellado R.P."/>
            <person name="Mizuno M."/>
            <person name="Moestl D."/>
            <person name="Nakai S."/>
            <person name="Noback M."/>
            <person name="Noone D."/>
            <person name="O'Reilly M."/>
            <person name="Ogawa K."/>
            <person name="Ogiwara A."/>
            <person name="Oudega B."/>
            <person name="Park S.-H."/>
            <person name="Parro V."/>
            <person name="Pohl T.M."/>
            <person name="Portetelle D."/>
            <person name="Porwollik S."/>
            <person name="Prescott A.M."/>
            <person name="Presecan E."/>
            <person name="Pujic P."/>
            <person name="Purnelle B."/>
            <person name="Rapoport G."/>
            <person name="Rey M."/>
            <person name="Reynolds S."/>
            <person name="Rieger M."/>
            <person name="Rivolta C."/>
            <person name="Rocha E."/>
            <person name="Roche B."/>
            <person name="Rose M."/>
            <person name="Sadaie Y."/>
            <person name="Sato T."/>
            <person name="Scanlan E."/>
            <person name="Schleich S."/>
            <person name="Schroeter R."/>
            <person name="Scoffone F."/>
            <person name="Sekiguchi J."/>
            <person name="Sekowska A."/>
            <person name="Seror S.J."/>
            <person name="Serror P."/>
            <person name="Shin B.-S."/>
            <person name="Soldo B."/>
            <person name="Sorokin A."/>
            <person name="Tacconi E."/>
            <person name="Takagi T."/>
            <person name="Takahashi H."/>
            <person name="Takemaru K."/>
            <person name="Takeuchi M."/>
            <person name="Tamakoshi A."/>
            <person name="Tanaka T."/>
            <person name="Terpstra P."/>
            <person name="Tognoni A."/>
            <person name="Tosato V."/>
            <person name="Uchiyama S."/>
            <person name="Vandenbol M."/>
            <person name="Vannier F."/>
            <person name="Vassarotti A."/>
            <person name="Viari A."/>
            <person name="Wambutt R."/>
            <person name="Wedler E."/>
            <person name="Wedler H."/>
            <person name="Weitzenegger T."/>
            <person name="Winters P."/>
            <person name="Wipat A."/>
            <person name="Yamamoto H."/>
            <person name="Yamane K."/>
            <person name="Yasumoto K."/>
            <person name="Yata K."/>
            <person name="Yoshida K."/>
            <person name="Yoshikawa H.-F."/>
            <person name="Zumstein E."/>
            <person name="Yoshikawa H."/>
            <person name="Danchin A."/>
        </authorList>
    </citation>
    <scope>NUCLEOTIDE SEQUENCE [LARGE SCALE GENOMIC DNA]</scope>
    <source>
        <strain>168</strain>
    </source>
</reference>
<reference key="4">
    <citation type="journal article" date="2001" name="J. Bacteriol.">
        <title>Comprehensive DNA microarray analysis of Bacillus subtilis two-component regulatory systems.</title>
        <authorList>
            <person name="Kobayashi K."/>
            <person name="Ogura M."/>
            <person name="Yamaguchi H."/>
            <person name="Yoshida K."/>
            <person name="Ogasawara N."/>
            <person name="Tanaka T."/>
            <person name="Fujita Y."/>
        </authorList>
    </citation>
    <scope>FUNCTION</scope>
</reference>
<reference key="5">
    <citation type="journal article" date="2007" name="Microbiology">
        <title>The Bacillus subtilis NatK-NatR two-component system regulates expression of the natAB operon encoding an ABC transporter for sodium ion extrusion.</title>
        <authorList>
            <person name="Ogura M."/>
            <person name="Tsukahara K."/>
            <person name="Hayashi K."/>
            <person name="Tanaka T."/>
        </authorList>
    </citation>
    <scope>FUNCTION</scope>
    <source>
        <strain>168</strain>
    </source>
</reference>